<keyword id="KW-0488">Methylation</keyword>
<keyword id="KW-1185">Reference proteome</keyword>
<keyword id="KW-0687">Ribonucleoprotein</keyword>
<keyword id="KW-0689">Ribosomal protein</keyword>
<keyword id="KW-0694">RNA-binding</keyword>
<keyword id="KW-0699">rRNA-binding</keyword>
<proteinExistence type="inferred from homology"/>
<protein>
    <recommendedName>
        <fullName evidence="2">Large ribosomal subunit protein uL11</fullName>
    </recommendedName>
    <alternativeName>
        <fullName evidence="3">50S ribosomal protein L11</fullName>
    </alternativeName>
</protein>
<gene>
    <name evidence="2" type="primary">rplK</name>
    <name type="ordered locus">SF4056</name>
    <name type="ordered locus">S3679</name>
</gene>
<dbReference type="EMBL" id="AE005674">
    <property type="protein sequence ID" value="AAN45485.1"/>
    <property type="molecule type" value="Genomic_DNA"/>
</dbReference>
<dbReference type="EMBL" id="AE014073">
    <property type="protein sequence ID" value="AAP18716.1"/>
    <property type="molecule type" value="Genomic_DNA"/>
</dbReference>
<dbReference type="RefSeq" id="NP_709778.1">
    <property type="nucleotide sequence ID" value="NC_004337.2"/>
</dbReference>
<dbReference type="RefSeq" id="WP_001085928.1">
    <property type="nucleotide sequence ID" value="NZ_CP123365.1"/>
</dbReference>
<dbReference type="SMR" id="Q83PC3"/>
<dbReference type="STRING" id="198214.SF4056"/>
<dbReference type="PaxDb" id="198214-SF4056"/>
<dbReference type="GeneID" id="1025115"/>
<dbReference type="KEGG" id="sfl:SF4056"/>
<dbReference type="KEGG" id="sfx:S3679"/>
<dbReference type="PATRIC" id="fig|198214.7.peg.4779"/>
<dbReference type="HOGENOM" id="CLU_074237_2_0_6"/>
<dbReference type="Proteomes" id="UP000001006">
    <property type="component" value="Chromosome"/>
</dbReference>
<dbReference type="Proteomes" id="UP000002673">
    <property type="component" value="Chromosome"/>
</dbReference>
<dbReference type="GO" id="GO:0022625">
    <property type="term" value="C:cytosolic large ribosomal subunit"/>
    <property type="evidence" value="ECO:0007669"/>
    <property type="project" value="TreeGrafter"/>
</dbReference>
<dbReference type="GO" id="GO:0070180">
    <property type="term" value="F:large ribosomal subunit rRNA binding"/>
    <property type="evidence" value="ECO:0007669"/>
    <property type="project" value="UniProtKB-UniRule"/>
</dbReference>
<dbReference type="GO" id="GO:0003735">
    <property type="term" value="F:structural constituent of ribosome"/>
    <property type="evidence" value="ECO:0007669"/>
    <property type="project" value="InterPro"/>
</dbReference>
<dbReference type="GO" id="GO:0006412">
    <property type="term" value="P:translation"/>
    <property type="evidence" value="ECO:0007669"/>
    <property type="project" value="UniProtKB-UniRule"/>
</dbReference>
<dbReference type="CDD" id="cd00349">
    <property type="entry name" value="Ribosomal_L11"/>
    <property type="match status" value="1"/>
</dbReference>
<dbReference type="FunFam" id="1.10.10.250:FF:000001">
    <property type="entry name" value="50S ribosomal protein L11"/>
    <property type="match status" value="1"/>
</dbReference>
<dbReference type="FunFam" id="3.30.1550.10:FF:000001">
    <property type="entry name" value="50S ribosomal protein L11"/>
    <property type="match status" value="1"/>
</dbReference>
<dbReference type="Gene3D" id="1.10.10.250">
    <property type="entry name" value="Ribosomal protein L11, C-terminal domain"/>
    <property type="match status" value="1"/>
</dbReference>
<dbReference type="Gene3D" id="3.30.1550.10">
    <property type="entry name" value="Ribosomal protein L11/L12, N-terminal domain"/>
    <property type="match status" value="1"/>
</dbReference>
<dbReference type="HAMAP" id="MF_00736">
    <property type="entry name" value="Ribosomal_uL11"/>
    <property type="match status" value="1"/>
</dbReference>
<dbReference type="InterPro" id="IPR000911">
    <property type="entry name" value="Ribosomal_uL11"/>
</dbReference>
<dbReference type="InterPro" id="IPR006519">
    <property type="entry name" value="Ribosomal_uL11_bac-typ"/>
</dbReference>
<dbReference type="InterPro" id="IPR020783">
    <property type="entry name" value="Ribosomal_uL11_C"/>
</dbReference>
<dbReference type="InterPro" id="IPR036769">
    <property type="entry name" value="Ribosomal_uL11_C_sf"/>
</dbReference>
<dbReference type="InterPro" id="IPR020785">
    <property type="entry name" value="Ribosomal_uL11_CS"/>
</dbReference>
<dbReference type="InterPro" id="IPR020784">
    <property type="entry name" value="Ribosomal_uL11_N"/>
</dbReference>
<dbReference type="InterPro" id="IPR036796">
    <property type="entry name" value="Ribosomal_uL11_N_sf"/>
</dbReference>
<dbReference type="NCBIfam" id="TIGR01632">
    <property type="entry name" value="L11_bact"/>
    <property type="match status" value="1"/>
</dbReference>
<dbReference type="PANTHER" id="PTHR11661">
    <property type="entry name" value="60S RIBOSOMAL PROTEIN L12"/>
    <property type="match status" value="1"/>
</dbReference>
<dbReference type="PANTHER" id="PTHR11661:SF1">
    <property type="entry name" value="LARGE RIBOSOMAL SUBUNIT PROTEIN UL11M"/>
    <property type="match status" value="1"/>
</dbReference>
<dbReference type="Pfam" id="PF00298">
    <property type="entry name" value="Ribosomal_L11"/>
    <property type="match status" value="1"/>
</dbReference>
<dbReference type="Pfam" id="PF03946">
    <property type="entry name" value="Ribosomal_L11_N"/>
    <property type="match status" value="1"/>
</dbReference>
<dbReference type="SMART" id="SM00649">
    <property type="entry name" value="RL11"/>
    <property type="match status" value="1"/>
</dbReference>
<dbReference type="SUPFAM" id="SSF54747">
    <property type="entry name" value="Ribosomal L11/L12e N-terminal domain"/>
    <property type="match status" value="1"/>
</dbReference>
<dbReference type="SUPFAM" id="SSF46906">
    <property type="entry name" value="Ribosomal protein L11, C-terminal domain"/>
    <property type="match status" value="1"/>
</dbReference>
<dbReference type="PROSITE" id="PS00359">
    <property type="entry name" value="RIBOSOMAL_L11"/>
    <property type="match status" value="1"/>
</dbReference>
<evidence type="ECO:0000250" key="1"/>
<evidence type="ECO:0000255" key="2">
    <source>
        <dbReference type="HAMAP-Rule" id="MF_00736"/>
    </source>
</evidence>
<evidence type="ECO:0000305" key="3"/>
<sequence length="142" mass="14874">MAKKVQAYVKLQVAAGMANPSPPVGPALGQQGVNIMEFCKAFNAKTDSIEKGLPIPVVITVYADRSFTFVTKTPPAAVLLKKAAGIKSGSGKPNKDKVGKISRAQLQQIAQTKAADMTGADIEAMTRSIEGTARSMGLVVED</sequence>
<organism>
    <name type="scientific">Shigella flexneri</name>
    <dbReference type="NCBI Taxonomy" id="623"/>
    <lineage>
        <taxon>Bacteria</taxon>
        <taxon>Pseudomonadati</taxon>
        <taxon>Pseudomonadota</taxon>
        <taxon>Gammaproteobacteria</taxon>
        <taxon>Enterobacterales</taxon>
        <taxon>Enterobacteriaceae</taxon>
        <taxon>Shigella</taxon>
    </lineage>
</organism>
<comment type="function">
    <text evidence="2">Forms part of the ribosomal stalk which helps the ribosome interact with GTP-bound translation factors.</text>
</comment>
<comment type="subunit">
    <text evidence="2">Part of the ribosomal stalk of the 50S ribosomal subunit. Interacts with L10 and the large rRNA to form the base of the stalk. L10 forms an elongated spine to which L12 dimers bind in a sequential fashion forming a multimeric L10(L12)X complex.</text>
</comment>
<comment type="PTM">
    <text evidence="2">One or more lysine residues are methylated.</text>
</comment>
<comment type="similarity">
    <text evidence="2">Belongs to the universal ribosomal protein uL11 family.</text>
</comment>
<accession>Q83PC3</accession>
<reference key="1">
    <citation type="journal article" date="2002" name="Nucleic Acids Res.">
        <title>Genome sequence of Shigella flexneri 2a: insights into pathogenicity through comparison with genomes of Escherichia coli K12 and O157.</title>
        <authorList>
            <person name="Jin Q."/>
            <person name="Yuan Z."/>
            <person name="Xu J."/>
            <person name="Wang Y."/>
            <person name="Shen Y."/>
            <person name="Lu W."/>
            <person name="Wang J."/>
            <person name="Liu H."/>
            <person name="Yang J."/>
            <person name="Yang F."/>
            <person name="Zhang X."/>
            <person name="Zhang J."/>
            <person name="Yang G."/>
            <person name="Wu H."/>
            <person name="Qu D."/>
            <person name="Dong J."/>
            <person name="Sun L."/>
            <person name="Xue Y."/>
            <person name="Zhao A."/>
            <person name="Gao Y."/>
            <person name="Zhu J."/>
            <person name="Kan B."/>
            <person name="Ding K."/>
            <person name="Chen S."/>
            <person name="Cheng H."/>
            <person name="Yao Z."/>
            <person name="He B."/>
            <person name="Chen R."/>
            <person name="Ma D."/>
            <person name="Qiang B."/>
            <person name="Wen Y."/>
            <person name="Hou Y."/>
            <person name="Yu J."/>
        </authorList>
    </citation>
    <scope>NUCLEOTIDE SEQUENCE [LARGE SCALE GENOMIC DNA]</scope>
    <source>
        <strain>301 / Serotype 2a</strain>
    </source>
</reference>
<reference key="2">
    <citation type="journal article" date="2003" name="Infect. Immun.">
        <title>Complete genome sequence and comparative genomics of Shigella flexneri serotype 2a strain 2457T.</title>
        <authorList>
            <person name="Wei J."/>
            <person name="Goldberg M.B."/>
            <person name="Burland V."/>
            <person name="Venkatesan M.M."/>
            <person name="Deng W."/>
            <person name="Fournier G."/>
            <person name="Mayhew G.F."/>
            <person name="Plunkett G. III"/>
            <person name="Rose D.J."/>
            <person name="Darling A."/>
            <person name="Mau B."/>
            <person name="Perna N.T."/>
            <person name="Payne S.M."/>
            <person name="Runyen-Janecky L.J."/>
            <person name="Zhou S."/>
            <person name="Schwartz D.C."/>
            <person name="Blattner F.R."/>
        </authorList>
    </citation>
    <scope>NUCLEOTIDE SEQUENCE [LARGE SCALE GENOMIC DNA]</scope>
    <source>
        <strain>ATCC 700930 / 2457T / Serotype 2a</strain>
    </source>
</reference>
<name>RL11_SHIFL</name>
<feature type="initiator methionine" description="Removed" evidence="1">
    <location>
        <position position="1"/>
    </location>
</feature>
<feature type="chain" id="PRO_0000104359" description="Large ribosomal subunit protein uL11">
    <location>
        <begin position="2"/>
        <end position="142"/>
    </location>
</feature>
<feature type="modified residue" description="N,N,N-trimethylalanine" evidence="1">
    <location>
        <position position="2"/>
    </location>
</feature>
<feature type="modified residue" description="N6,N6,N6-trimethyllysine" evidence="1">
    <location>
        <position position="4"/>
    </location>
</feature>
<feature type="modified residue" description="N6,N6,N6-trimethyllysine" evidence="1">
    <location>
        <position position="40"/>
    </location>
</feature>
<feature type="sequence conflict" description="In Ref. 2; AAP18716." evidence="3" ref="2">
    <original>Q</original>
    <variation>E</variation>
    <location>
        <position position="108"/>
    </location>
</feature>